<organism>
    <name type="scientific">Methanococcus voltae (strain ATCC BAA-1334 / A3)</name>
    <dbReference type="NCBI Taxonomy" id="456320"/>
    <lineage>
        <taxon>Archaea</taxon>
        <taxon>Methanobacteriati</taxon>
        <taxon>Methanobacteriota</taxon>
        <taxon>Methanomada group</taxon>
        <taxon>Methanococci</taxon>
        <taxon>Methanococcales</taxon>
        <taxon>Methanococcaceae</taxon>
        <taxon>Methanococcus</taxon>
    </lineage>
</organism>
<protein>
    <recommendedName>
        <fullName evidence="1">FAD synthase</fullName>
        <ecNumber evidence="1">2.7.7.2</ecNumber>
    </recommendedName>
    <alternativeName>
        <fullName evidence="1">FMN adenylyltransferase</fullName>
    </alternativeName>
    <alternativeName>
        <fullName evidence="1">Flavin adenine dinucleotide synthase</fullName>
    </alternativeName>
</protein>
<name>RIBL_METV3</name>
<gene>
    <name evidence="1" type="primary">ribL</name>
    <name type="ordered locus">Mvol_0889</name>
</gene>
<proteinExistence type="inferred from homology"/>
<reference key="1">
    <citation type="submission" date="2010-05" db="EMBL/GenBank/DDBJ databases">
        <title>Complete sequence of Methanococcus voltae A3.</title>
        <authorList>
            <consortium name="US DOE Joint Genome Institute"/>
            <person name="Lucas S."/>
            <person name="Copeland A."/>
            <person name="Lapidus A."/>
            <person name="Cheng J.-F."/>
            <person name="Bruce D."/>
            <person name="Goodwin L."/>
            <person name="Pitluck S."/>
            <person name="Lowry S."/>
            <person name="Clum A."/>
            <person name="Land M."/>
            <person name="Hauser L."/>
            <person name="Kyrpides N."/>
            <person name="Mikhailova N."/>
            <person name="Whitman W.B."/>
            <person name="Woyke T."/>
        </authorList>
    </citation>
    <scope>NUCLEOTIDE SEQUENCE [LARGE SCALE GENOMIC DNA]</scope>
    <source>
        <strain>ATCC BAA-1334 / A3</strain>
    </source>
</reference>
<feature type="chain" id="PRO_0000406259" description="FAD synthase">
    <location>
        <begin position="1"/>
        <end position="174"/>
    </location>
</feature>
<feature type="binding site" evidence="1">
    <location>
        <begin position="34"/>
        <end position="35"/>
    </location>
    <ligand>
        <name>ATP</name>
        <dbReference type="ChEBI" id="CHEBI:30616"/>
    </ligand>
</feature>
<feature type="binding site" evidence="1">
    <location>
        <begin position="39"/>
        <end position="42"/>
    </location>
    <ligand>
        <name>ATP</name>
        <dbReference type="ChEBI" id="CHEBI:30616"/>
    </ligand>
</feature>
<feature type="binding site" evidence="1">
    <location>
        <position position="119"/>
    </location>
    <ligand>
        <name>ATP</name>
        <dbReference type="ChEBI" id="CHEBI:30616"/>
    </ligand>
</feature>
<feature type="binding site" evidence="1">
    <location>
        <position position="147"/>
    </location>
    <ligand>
        <name>ATP</name>
        <dbReference type="ChEBI" id="CHEBI:30616"/>
    </ligand>
</feature>
<evidence type="ECO:0000255" key="1">
    <source>
        <dbReference type="HAMAP-Rule" id="MF_02115"/>
    </source>
</evidence>
<comment type="function">
    <text evidence="1">Catalyzes the transfer of the AMP portion of ATP to flavin mononucleotide (FMN) to produce flavin adenine dinucleotide (FAD) coenzyme.</text>
</comment>
<comment type="catalytic activity">
    <reaction evidence="1">
        <text>FMN + ATP + H(+) = FAD + diphosphate</text>
        <dbReference type="Rhea" id="RHEA:17237"/>
        <dbReference type="ChEBI" id="CHEBI:15378"/>
        <dbReference type="ChEBI" id="CHEBI:30616"/>
        <dbReference type="ChEBI" id="CHEBI:33019"/>
        <dbReference type="ChEBI" id="CHEBI:57692"/>
        <dbReference type="ChEBI" id="CHEBI:58210"/>
        <dbReference type="EC" id="2.7.7.2"/>
    </reaction>
</comment>
<comment type="cofactor">
    <cofactor evidence="1">
        <name>a divalent metal cation</name>
        <dbReference type="ChEBI" id="CHEBI:60240"/>
    </cofactor>
</comment>
<comment type="pathway">
    <text evidence="1">Cofactor biosynthesis; FAD biosynthesis; FAD from FMN: step 1/1.</text>
</comment>
<comment type="subunit">
    <text evidence="1">Homodimer.</text>
</comment>
<comment type="similarity">
    <text evidence="1">Belongs to the archaeal FAD synthase family.</text>
</comment>
<sequence>MIIVIIMPKNENNPNIKNNNHQSPKKRIALTAGTFDLLHPGHFNTLNFAKKHADELVVVLARDETVKRIKGRRPVIPEEQRKIMIETLKPVDKAILGSLTDKLEPILSVKPDIIVLGPDQTTYQLEELKNQLLERGFKTEIVKVEEYVKCPFHSSYDILKEIIRRWCNKEIELK</sequence>
<accession>D7DTT8</accession>
<dbReference type="EC" id="2.7.7.2" evidence="1"/>
<dbReference type="EMBL" id="CP002057">
    <property type="protein sequence ID" value="ADI36548.1"/>
    <property type="molecule type" value="Genomic_DNA"/>
</dbReference>
<dbReference type="SMR" id="D7DTT8"/>
<dbReference type="FunCoup" id="D7DTT8">
    <property type="interactions" value="12"/>
</dbReference>
<dbReference type="STRING" id="456320.Mvol_0889"/>
<dbReference type="KEGG" id="mvo:Mvol_0889"/>
<dbReference type="eggNOG" id="arCOG01222">
    <property type="taxonomic scope" value="Archaea"/>
</dbReference>
<dbReference type="HOGENOM" id="CLU_034585_2_1_2"/>
<dbReference type="InParanoid" id="D7DTT8"/>
<dbReference type="UniPathway" id="UPA00277">
    <property type="reaction ID" value="UER00407"/>
</dbReference>
<dbReference type="Proteomes" id="UP000007722">
    <property type="component" value="Chromosome"/>
</dbReference>
<dbReference type="GO" id="GO:0005524">
    <property type="term" value="F:ATP binding"/>
    <property type="evidence" value="ECO:0007669"/>
    <property type="project" value="UniProtKB-UniRule"/>
</dbReference>
<dbReference type="GO" id="GO:0003919">
    <property type="term" value="F:FMN adenylyltransferase activity"/>
    <property type="evidence" value="ECO:0007669"/>
    <property type="project" value="UniProtKB-UniRule"/>
</dbReference>
<dbReference type="GO" id="GO:0006747">
    <property type="term" value="P:FAD biosynthetic process"/>
    <property type="evidence" value="ECO:0007669"/>
    <property type="project" value="UniProtKB-UniRule"/>
</dbReference>
<dbReference type="GO" id="GO:0046444">
    <property type="term" value="P:FMN metabolic process"/>
    <property type="evidence" value="ECO:0007669"/>
    <property type="project" value="UniProtKB-UniRule"/>
</dbReference>
<dbReference type="Gene3D" id="3.40.50.620">
    <property type="entry name" value="HUPs"/>
    <property type="match status" value="1"/>
</dbReference>
<dbReference type="HAMAP" id="MF_02115">
    <property type="entry name" value="FAD_synth_arch"/>
    <property type="match status" value="1"/>
</dbReference>
<dbReference type="InterPro" id="IPR050385">
    <property type="entry name" value="Archaeal_FAD_synthase"/>
</dbReference>
<dbReference type="InterPro" id="IPR004821">
    <property type="entry name" value="Cyt_trans-like"/>
</dbReference>
<dbReference type="InterPro" id="IPR024902">
    <property type="entry name" value="FAD_synth_RibL"/>
</dbReference>
<dbReference type="InterPro" id="IPR014729">
    <property type="entry name" value="Rossmann-like_a/b/a_fold"/>
</dbReference>
<dbReference type="NCBIfam" id="TIGR00125">
    <property type="entry name" value="cyt_tran_rel"/>
    <property type="match status" value="1"/>
</dbReference>
<dbReference type="PANTHER" id="PTHR43793">
    <property type="entry name" value="FAD SYNTHASE"/>
    <property type="match status" value="1"/>
</dbReference>
<dbReference type="PANTHER" id="PTHR43793:SF1">
    <property type="entry name" value="FAD SYNTHASE"/>
    <property type="match status" value="1"/>
</dbReference>
<dbReference type="Pfam" id="PF01467">
    <property type="entry name" value="CTP_transf_like"/>
    <property type="match status" value="1"/>
</dbReference>
<dbReference type="SUPFAM" id="SSF52374">
    <property type="entry name" value="Nucleotidylyl transferase"/>
    <property type="match status" value="1"/>
</dbReference>
<keyword id="KW-0067">ATP-binding</keyword>
<keyword id="KW-0274">FAD</keyword>
<keyword id="KW-0285">Flavoprotein</keyword>
<keyword id="KW-0288">FMN</keyword>
<keyword id="KW-0547">Nucleotide-binding</keyword>
<keyword id="KW-0548">Nucleotidyltransferase</keyword>
<keyword id="KW-1185">Reference proteome</keyword>
<keyword id="KW-0808">Transferase</keyword>